<dbReference type="EC" id="2.4.2.29" evidence="1"/>
<dbReference type="EMBL" id="CP000111">
    <property type="protein sequence ID" value="ABB49334.1"/>
    <property type="molecule type" value="Genomic_DNA"/>
</dbReference>
<dbReference type="RefSeq" id="WP_011375836.1">
    <property type="nucleotide sequence ID" value="NC_007577.1"/>
</dbReference>
<dbReference type="SMR" id="Q31CR1"/>
<dbReference type="STRING" id="74546.PMT9312_0273"/>
<dbReference type="KEGG" id="pmi:PMT9312_0273"/>
<dbReference type="eggNOG" id="COG0343">
    <property type="taxonomic scope" value="Bacteria"/>
</dbReference>
<dbReference type="HOGENOM" id="CLU_022060_0_1_3"/>
<dbReference type="OrthoDB" id="9805417at2"/>
<dbReference type="UniPathway" id="UPA00392"/>
<dbReference type="Proteomes" id="UP000002715">
    <property type="component" value="Chromosome"/>
</dbReference>
<dbReference type="GO" id="GO:0005829">
    <property type="term" value="C:cytosol"/>
    <property type="evidence" value="ECO:0007669"/>
    <property type="project" value="TreeGrafter"/>
</dbReference>
<dbReference type="GO" id="GO:0046872">
    <property type="term" value="F:metal ion binding"/>
    <property type="evidence" value="ECO:0007669"/>
    <property type="project" value="UniProtKB-KW"/>
</dbReference>
<dbReference type="GO" id="GO:0008479">
    <property type="term" value="F:tRNA-guanosine(34) queuine transglycosylase activity"/>
    <property type="evidence" value="ECO:0007669"/>
    <property type="project" value="UniProtKB-UniRule"/>
</dbReference>
<dbReference type="GO" id="GO:0008616">
    <property type="term" value="P:queuosine biosynthetic process"/>
    <property type="evidence" value="ECO:0007669"/>
    <property type="project" value="UniProtKB-UniRule"/>
</dbReference>
<dbReference type="GO" id="GO:0002099">
    <property type="term" value="P:tRNA wobble guanine modification"/>
    <property type="evidence" value="ECO:0007669"/>
    <property type="project" value="TreeGrafter"/>
</dbReference>
<dbReference type="GO" id="GO:0101030">
    <property type="term" value="P:tRNA-guanine transglycosylation"/>
    <property type="evidence" value="ECO:0007669"/>
    <property type="project" value="InterPro"/>
</dbReference>
<dbReference type="Gene3D" id="3.20.20.105">
    <property type="entry name" value="Queuine tRNA-ribosyltransferase-like"/>
    <property type="match status" value="1"/>
</dbReference>
<dbReference type="HAMAP" id="MF_00168">
    <property type="entry name" value="Q_tRNA_Tgt"/>
    <property type="match status" value="1"/>
</dbReference>
<dbReference type="InterPro" id="IPR050076">
    <property type="entry name" value="ArchSynthase1/Queuine_TRR"/>
</dbReference>
<dbReference type="InterPro" id="IPR004803">
    <property type="entry name" value="TGT"/>
</dbReference>
<dbReference type="InterPro" id="IPR036511">
    <property type="entry name" value="TGT-like_sf"/>
</dbReference>
<dbReference type="InterPro" id="IPR002616">
    <property type="entry name" value="tRNA_ribo_trans-like"/>
</dbReference>
<dbReference type="NCBIfam" id="TIGR00430">
    <property type="entry name" value="Q_tRNA_tgt"/>
    <property type="match status" value="1"/>
</dbReference>
<dbReference type="NCBIfam" id="TIGR00449">
    <property type="entry name" value="tgt_general"/>
    <property type="match status" value="1"/>
</dbReference>
<dbReference type="PANTHER" id="PTHR46499">
    <property type="entry name" value="QUEUINE TRNA-RIBOSYLTRANSFERASE"/>
    <property type="match status" value="1"/>
</dbReference>
<dbReference type="PANTHER" id="PTHR46499:SF1">
    <property type="entry name" value="QUEUINE TRNA-RIBOSYLTRANSFERASE"/>
    <property type="match status" value="1"/>
</dbReference>
<dbReference type="Pfam" id="PF01702">
    <property type="entry name" value="TGT"/>
    <property type="match status" value="1"/>
</dbReference>
<dbReference type="SUPFAM" id="SSF51713">
    <property type="entry name" value="tRNA-guanine transglycosylase"/>
    <property type="match status" value="1"/>
</dbReference>
<reference key="1">
    <citation type="journal article" date="2006" name="Science">
        <title>Genomic islands and the ecology and evolution of Prochlorococcus.</title>
        <authorList>
            <person name="Coleman M.L."/>
            <person name="Sullivan M.B."/>
            <person name="Martiny A.C."/>
            <person name="Steglich C."/>
            <person name="Barry K."/>
            <person name="Delong E.F."/>
            <person name="Chisholm S.W."/>
        </authorList>
    </citation>
    <scope>NUCLEOTIDE SEQUENCE [LARGE SCALE GENOMIC DNA]</scope>
    <source>
        <strain>MIT 9312</strain>
    </source>
</reference>
<accession>Q31CR1</accession>
<keyword id="KW-0328">Glycosyltransferase</keyword>
<keyword id="KW-0479">Metal-binding</keyword>
<keyword id="KW-0671">Queuosine biosynthesis</keyword>
<keyword id="KW-0808">Transferase</keyword>
<keyword id="KW-0819">tRNA processing</keyword>
<keyword id="KW-0862">Zinc</keyword>
<name>TGT_PROM9</name>
<comment type="function">
    <text evidence="1">Catalyzes the base-exchange of a guanine (G) residue with the queuine precursor 7-aminomethyl-7-deazaguanine (PreQ1) at position 34 (anticodon wobble position) in tRNAs with GU(N) anticodons (tRNA-Asp, -Asn, -His and -Tyr). Catalysis occurs through a double-displacement mechanism. The nucleophile active site attacks the C1' of nucleotide 34 to detach the guanine base from the RNA, forming a covalent enzyme-RNA intermediate. The proton acceptor active site deprotonates the incoming PreQ1, allowing a nucleophilic attack on the C1' of the ribose to form the product. After dissociation, two additional enzymatic reactions on the tRNA convert PreQ1 to queuine (Q), resulting in the hypermodified nucleoside queuosine (7-(((4,5-cis-dihydroxy-2-cyclopenten-1-yl)amino)methyl)-7-deazaguanosine).</text>
</comment>
<comment type="catalytic activity">
    <reaction evidence="1">
        <text>7-aminomethyl-7-carbaguanine + guanosine(34) in tRNA = 7-aminomethyl-7-carbaguanosine(34) in tRNA + guanine</text>
        <dbReference type="Rhea" id="RHEA:24104"/>
        <dbReference type="Rhea" id="RHEA-COMP:10341"/>
        <dbReference type="Rhea" id="RHEA-COMP:10342"/>
        <dbReference type="ChEBI" id="CHEBI:16235"/>
        <dbReference type="ChEBI" id="CHEBI:58703"/>
        <dbReference type="ChEBI" id="CHEBI:74269"/>
        <dbReference type="ChEBI" id="CHEBI:82833"/>
        <dbReference type="EC" id="2.4.2.29"/>
    </reaction>
</comment>
<comment type="cofactor">
    <cofactor evidence="1">
        <name>Zn(2+)</name>
        <dbReference type="ChEBI" id="CHEBI:29105"/>
    </cofactor>
    <text evidence="1">Binds 1 zinc ion per subunit.</text>
</comment>
<comment type="pathway">
    <text evidence="1">tRNA modification; tRNA-queuosine biosynthesis.</text>
</comment>
<comment type="subunit">
    <text evidence="1">Homodimer. Within each dimer, one monomer is responsible for RNA recognition and catalysis, while the other monomer binds to the replacement base PreQ1.</text>
</comment>
<comment type="similarity">
    <text evidence="1">Belongs to the queuine tRNA-ribosyltransferase family.</text>
</comment>
<feature type="chain" id="PRO_1000016825" description="Queuine tRNA-ribosyltransferase">
    <location>
        <begin position="1"/>
        <end position="372"/>
    </location>
</feature>
<feature type="region of interest" description="RNA binding" evidence="1">
    <location>
        <begin position="246"/>
        <end position="252"/>
    </location>
</feature>
<feature type="region of interest" description="RNA binding; important for wobble base 34 recognition" evidence="1">
    <location>
        <begin position="270"/>
        <end position="274"/>
    </location>
</feature>
<feature type="active site" description="Proton acceptor" evidence="1">
    <location>
        <position position="92"/>
    </location>
</feature>
<feature type="active site" description="Nucleophile" evidence="1">
    <location>
        <position position="265"/>
    </location>
</feature>
<feature type="binding site" evidence="1">
    <location>
        <begin position="92"/>
        <end position="96"/>
    </location>
    <ligand>
        <name>substrate</name>
    </ligand>
</feature>
<feature type="binding site" evidence="1">
    <location>
        <position position="146"/>
    </location>
    <ligand>
        <name>substrate</name>
    </ligand>
</feature>
<feature type="binding site" evidence="1">
    <location>
        <position position="188"/>
    </location>
    <ligand>
        <name>substrate</name>
    </ligand>
</feature>
<feature type="binding site" evidence="1">
    <location>
        <position position="215"/>
    </location>
    <ligand>
        <name>substrate</name>
    </ligand>
</feature>
<feature type="binding site" evidence="1">
    <location>
        <position position="303"/>
    </location>
    <ligand>
        <name>Zn(2+)</name>
        <dbReference type="ChEBI" id="CHEBI:29105"/>
    </ligand>
</feature>
<feature type="binding site" evidence="1">
    <location>
        <position position="305"/>
    </location>
    <ligand>
        <name>Zn(2+)</name>
        <dbReference type="ChEBI" id="CHEBI:29105"/>
    </ligand>
</feature>
<feature type="binding site" evidence="1">
    <location>
        <position position="308"/>
    </location>
    <ligand>
        <name>Zn(2+)</name>
        <dbReference type="ChEBI" id="CHEBI:29105"/>
    </ligand>
</feature>
<feature type="binding site" evidence="1">
    <location>
        <position position="334"/>
    </location>
    <ligand>
        <name>Zn(2+)</name>
        <dbReference type="ChEBI" id="CHEBI:29105"/>
    </ligand>
</feature>
<evidence type="ECO:0000255" key="1">
    <source>
        <dbReference type="HAMAP-Rule" id="MF_00168"/>
    </source>
</evidence>
<proteinExistence type="inferred from homology"/>
<protein>
    <recommendedName>
        <fullName evidence="1">Queuine tRNA-ribosyltransferase</fullName>
        <ecNumber evidence="1">2.4.2.29</ecNumber>
    </recommendedName>
    <alternativeName>
        <fullName evidence="1">Guanine insertion enzyme</fullName>
    </alternativeName>
    <alternativeName>
        <fullName evidence="1">tRNA-guanine transglycosylase</fullName>
    </alternativeName>
</protein>
<gene>
    <name evidence="1" type="primary">tgt</name>
    <name type="ordered locus">PMT9312_0273</name>
</gene>
<organism>
    <name type="scientific">Prochlorococcus marinus (strain MIT 9312)</name>
    <dbReference type="NCBI Taxonomy" id="74546"/>
    <lineage>
        <taxon>Bacteria</taxon>
        <taxon>Bacillati</taxon>
        <taxon>Cyanobacteriota</taxon>
        <taxon>Cyanophyceae</taxon>
        <taxon>Synechococcales</taxon>
        <taxon>Prochlorococcaceae</taxon>
        <taxon>Prochlorococcus</taxon>
    </lineage>
</organism>
<sequence length="372" mass="41580">MFQFEITSNCSNTDARTGIFHTPNGQVNTPRFMPVGTLGTVKGISSKQLTSTGSEMILSNTFHLHLQPGEKLVKESGGIHKFMNWPKPILTDSGGYQVFSLAKLNNISDKGVEFKNPRDGSHVFLSPEKVMQIQMDLGSDVAMAFDHCPPHTANENDIEDSLLRTHSWLQKCVETHQKSNQALFGIIQGGKYPRLREYSAKFTSSFDLPGIAVGGVSVGEAVEEIHSVINYIPKFLPINKPRYLMGIGSLREISLAVAKGFDIFDCVLPTRLGRHGTAFFNDQRLNLRNARFKNDFSPIDKTCKCETCKSYSRAYLHHLIRNDEILGLTLISLHNIAHLIRFTNAISNAIKDNCFTIDFAPWKTASIAHHTW</sequence>